<reference key="1">
    <citation type="journal article" date="2008" name="Appl. Environ. Microbiol.">
        <title>The genome of Polaromonas sp. strain JS666: insights into the evolution of a hydrocarbon- and xenobiotic-degrading bacterium, and features of relevance to biotechnology.</title>
        <authorList>
            <person name="Mattes T.E."/>
            <person name="Alexander A.K."/>
            <person name="Richardson P.M."/>
            <person name="Munk A.C."/>
            <person name="Han C.S."/>
            <person name="Stothard P."/>
            <person name="Coleman N.V."/>
        </authorList>
    </citation>
    <scope>NUCLEOTIDE SEQUENCE [LARGE SCALE GENOMIC DNA]</scope>
    <source>
        <strain>JS666 / ATCC BAA-500</strain>
    </source>
</reference>
<gene>
    <name evidence="1" type="primary">aat</name>
    <name type="ordered locus">Bpro_2326</name>
</gene>
<organism>
    <name type="scientific">Polaromonas sp. (strain JS666 / ATCC BAA-500)</name>
    <dbReference type="NCBI Taxonomy" id="296591"/>
    <lineage>
        <taxon>Bacteria</taxon>
        <taxon>Pseudomonadati</taxon>
        <taxon>Pseudomonadota</taxon>
        <taxon>Betaproteobacteria</taxon>
        <taxon>Burkholderiales</taxon>
        <taxon>Comamonadaceae</taxon>
        <taxon>Polaromonas</taxon>
    </lineage>
</organism>
<dbReference type="EC" id="2.3.2.6" evidence="1"/>
<dbReference type="EMBL" id="CP000316">
    <property type="protein sequence ID" value="ABE44249.1"/>
    <property type="molecule type" value="Genomic_DNA"/>
</dbReference>
<dbReference type="RefSeq" id="WP_011483247.1">
    <property type="nucleotide sequence ID" value="NC_007948.1"/>
</dbReference>
<dbReference type="SMR" id="Q12B43"/>
<dbReference type="STRING" id="296591.Bpro_2326"/>
<dbReference type="KEGG" id="pol:Bpro_2326"/>
<dbReference type="eggNOG" id="COG2360">
    <property type="taxonomic scope" value="Bacteria"/>
</dbReference>
<dbReference type="HOGENOM" id="CLU_075045_0_0_4"/>
<dbReference type="Proteomes" id="UP000001983">
    <property type="component" value="Chromosome"/>
</dbReference>
<dbReference type="GO" id="GO:0005737">
    <property type="term" value="C:cytoplasm"/>
    <property type="evidence" value="ECO:0007669"/>
    <property type="project" value="UniProtKB-SubCell"/>
</dbReference>
<dbReference type="GO" id="GO:0008914">
    <property type="term" value="F:leucyl-tRNA--protein transferase activity"/>
    <property type="evidence" value="ECO:0007669"/>
    <property type="project" value="UniProtKB-UniRule"/>
</dbReference>
<dbReference type="GO" id="GO:0030163">
    <property type="term" value="P:protein catabolic process"/>
    <property type="evidence" value="ECO:0007669"/>
    <property type="project" value="UniProtKB-UniRule"/>
</dbReference>
<dbReference type="Gene3D" id="3.40.630.70">
    <property type="entry name" value="Leucyl/phenylalanyl-tRNA-protein transferase, C-terminal domain"/>
    <property type="match status" value="1"/>
</dbReference>
<dbReference type="Gene3D" id="3.30.70.3550">
    <property type="entry name" value="Leucyl/phenylalanyl-tRNA-protein transferase, N-terminal domain"/>
    <property type="match status" value="1"/>
</dbReference>
<dbReference type="HAMAP" id="MF_00688">
    <property type="entry name" value="Leu_Phe_trans"/>
    <property type="match status" value="1"/>
</dbReference>
<dbReference type="InterPro" id="IPR016181">
    <property type="entry name" value="Acyl_CoA_acyltransferase"/>
</dbReference>
<dbReference type="InterPro" id="IPR004616">
    <property type="entry name" value="Leu/Phe-tRNA_Trfase"/>
</dbReference>
<dbReference type="InterPro" id="IPR042203">
    <property type="entry name" value="Leu/Phe-tRNA_Trfase_C"/>
</dbReference>
<dbReference type="InterPro" id="IPR042221">
    <property type="entry name" value="Leu/Phe-tRNA_Trfase_N"/>
</dbReference>
<dbReference type="NCBIfam" id="TIGR00667">
    <property type="entry name" value="aat"/>
    <property type="match status" value="1"/>
</dbReference>
<dbReference type="PANTHER" id="PTHR30098">
    <property type="entry name" value="LEUCYL/PHENYLALANYL-TRNA--PROTEIN TRANSFERASE"/>
    <property type="match status" value="1"/>
</dbReference>
<dbReference type="PANTHER" id="PTHR30098:SF2">
    <property type="entry name" value="LEUCYL_PHENYLALANYL-TRNA--PROTEIN TRANSFERASE"/>
    <property type="match status" value="1"/>
</dbReference>
<dbReference type="Pfam" id="PF03588">
    <property type="entry name" value="Leu_Phe_trans"/>
    <property type="match status" value="1"/>
</dbReference>
<dbReference type="SUPFAM" id="SSF55729">
    <property type="entry name" value="Acyl-CoA N-acyltransferases (Nat)"/>
    <property type="match status" value="1"/>
</dbReference>
<comment type="function">
    <text evidence="1">Functions in the N-end rule pathway of protein degradation where it conjugates Leu, Phe and, less efficiently, Met from aminoacyl-tRNAs to the N-termini of proteins containing an N-terminal arginine or lysine.</text>
</comment>
<comment type="catalytic activity">
    <reaction evidence="1">
        <text>N-terminal L-lysyl-[protein] + L-leucyl-tRNA(Leu) = N-terminal L-leucyl-L-lysyl-[protein] + tRNA(Leu) + H(+)</text>
        <dbReference type="Rhea" id="RHEA:12340"/>
        <dbReference type="Rhea" id="RHEA-COMP:9613"/>
        <dbReference type="Rhea" id="RHEA-COMP:9622"/>
        <dbReference type="Rhea" id="RHEA-COMP:12670"/>
        <dbReference type="Rhea" id="RHEA-COMP:12671"/>
        <dbReference type="ChEBI" id="CHEBI:15378"/>
        <dbReference type="ChEBI" id="CHEBI:65249"/>
        <dbReference type="ChEBI" id="CHEBI:78442"/>
        <dbReference type="ChEBI" id="CHEBI:78494"/>
        <dbReference type="ChEBI" id="CHEBI:133043"/>
        <dbReference type="EC" id="2.3.2.6"/>
    </reaction>
</comment>
<comment type="catalytic activity">
    <reaction evidence="1">
        <text>N-terminal L-arginyl-[protein] + L-leucyl-tRNA(Leu) = N-terminal L-leucyl-L-arginyl-[protein] + tRNA(Leu) + H(+)</text>
        <dbReference type="Rhea" id="RHEA:50416"/>
        <dbReference type="Rhea" id="RHEA-COMP:9613"/>
        <dbReference type="Rhea" id="RHEA-COMP:9622"/>
        <dbReference type="Rhea" id="RHEA-COMP:12672"/>
        <dbReference type="Rhea" id="RHEA-COMP:12673"/>
        <dbReference type="ChEBI" id="CHEBI:15378"/>
        <dbReference type="ChEBI" id="CHEBI:64719"/>
        <dbReference type="ChEBI" id="CHEBI:78442"/>
        <dbReference type="ChEBI" id="CHEBI:78494"/>
        <dbReference type="ChEBI" id="CHEBI:133044"/>
        <dbReference type="EC" id="2.3.2.6"/>
    </reaction>
</comment>
<comment type="catalytic activity">
    <reaction evidence="1">
        <text>L-phenylalanyl-tRNA(Phe) + an N-terminal L-alpha-aminoacyl-[protein] = an N-terminal L-phenylalanyl-L-alpha-aminoacyl-[protein] + tRNA(Phe)</text>
        <dbReference type="Rhea" id="RHEA:43632"/>
        <dbReference type="Rhea" id="RHEA-COMP:9668"/>
        <dbReference type="Rhea" id="RHEA-COMP:9699"/>
        <dbReference type="Rhea" id="RHEA-COMP:10636"/>
        <dbReference type="Rhea" id="RHEA-COMP:10637"/>
        <dbReference type="ChEBI" id="CHEBI:78442"/>
        <dbReference type="ChEBI" id="CHEBI:78531"/>
        <dbReference type="ChEBI" id="CHEBI:78597"/>
        <dbReference type="ChEBI" id="CHEBI:83561"/>
        <dbReference type="EC" id="2.3.2.6"/>
    </reaction>
</comment>
<comment type="subcellular location">
    <subcellularLocation>
        <location evidence="1">Cytoplasm</location>
    </subcellularLocation>
</comment>
<comment type="similarity">
    <text evidence="1">Belongs to the L/F-transferase family.</text>
</comment>
<protein>
    <recommendedName>
        <fullName evidence="1">Leucyl/phenylalanyl-tRNA--protein transferase</fullName>
        <ecNumber evidence="1">2.3.2.6</ecNumber>
    </recommendedName>
    <alternativeName>
        <fullName evidence="1">L/F-transferase</fullName>
    </alternativeName>
    <alternativeName>
        <fullName evidence="1">Leucyltransferase</fullName>
    </alternativeName>
    <alternativeName>
        <fullName evidence="1">Phenyalanyltransferase</fullName>
    </alternativeName>
</protein>
<feature type="chain" id="PRO_0000258075" description="Leucyl/phenylalanyl-tRNA--protein transferase">
    <location>
        <begin position="1"/>
        <end position="255"/>
    </location>
</feature>
<sequence>MGKLPRPVPWLAAGENFPPLEFAWGRHDPAPGLLAAGAALDVPTLIQAYSRGIFPWFSLGQPVLWWSPDPRMVLHTEKFKLHRSLRKSLIHFLDDPECEIKFDSAFEHVIKACASQPRAGQPGTWIVPDMVQAYSSLHRAGYAHSVETWVRGKLVGGLYCVKLGRMVFGESMFAHQTDASKIALAALVGFCRAHQIAMIDCQQNTRHLASLGAAEIDRADFVRHLAQNVEKTTPPWQFEPVYWKQILTAEKPTLP</sequence>
<proteinExistence type="inferred from homology"/>
<keyword id="KW-0012">Acyltransferase</keyword>
<keyword id="KW-0963">Cytoplasm</keyword>
<keyword id="KW-1185">Reference proteome</keyword>
<keyword id="KW-0808">Transferase</keyword>
<accession>Q12B43</accession>
<name>LFTR_POLSJ</name>
<evidence type="ECO:0000255" key="1">
    <source>
        <dbReference type="HAMAP-Rule" id="MF_00688"/>
    </source>
</evidence>